<dbReference type="EC" id="3.4.25.2" evidence="1"/>
<dbReference type="EMBL" id="AM181176">
    <property type="protein sequence ID" value="CAY46676.1"/>
    <property type="molecule type" value="Genomic_DNA"/>
</dbReference>
<dbReference type="RefSeq" id="WP_003171209.1">
    <property type="nucleotide sequence ID" value="NC_012660.1"/>
</dbReference>
<dbReference type="SMR" id="C3KAH1"/>
<dbReference type="STRING" id="294.SRM1_00448"/>
<dbReference type="MEROPS" id="T01.007"/>
<dbReference type="GeneID" id="97918418"/>
<dbReference type="eggNOG" id="COG5405">
    <property type="taxonomic scope" value="Bacteria"/>
</dbReference>
<dbReference type="HOGENOM" id="CLU_093872_1_0_6"/>
<dbReference type="OrthoDB" id="9804884at2"/>
<dbReference type="GO" id="GO:0009376">
    <property type="term" value="C:HslUV protease complex"/>
    <property type="evidence" value="ECO:0007669"/>
    <property type="project" value="UniProtKB-UniRule"/>
</dbReference>
<dbReference type="GO" id="GO:0005839">
    <property type="term" value="C:proteasome core complex"/>
    <property type="evidence" value="ECO:0007669"/>
    <property type="project" value="InterPro"/>
</dbReference>
<dbReference type="GO" id="GO:0046872">
    <property type="term" value="F:metal ion binding"/>
    <property type="evidence" value="ECO:0007669"/>
    <property type="project" value="UniProtKB-KW"/>
</dbReference>
<dbReference type="GO" id="GO:0004298">
    <property type="term" value="F:threonine-type endopeptidase activity"/>
    <property type="evidence" value="ECO:0007669"/>
    <property type="project" value="UniProtKB-KW"/>
</dbReference>
<dbReference type="GO" id="GO:0051603">
    <property type="term" value="P:proteolysis involved in protein catabolic process"/>
    <property type="evidence" value="ECO:0007669"/>
    <property type="project" value="InterPro"/>
</dbReference>
<dbReference type="CDD" id="cd01913">
    <property type="entry name" value="protease_HslV"/>
    <property type="match status" value="1"/>
</dbReference>
<dbReference type="FunFam" id="3.60.20.10:FF:000002">
    <property type="entry name" value="ATP-dependent protease subunit HslV"/>
    <property type="match status" value="1"/>
</dbReference>
<dbReference type="Gene3D" id="3.60.20.10">
    <property type="entry name" value="Glutamine Phosphoribosylpyrophosphate, subunit 1, domain 1"/>
    <property type="match status" value="1"/>
</dbReference>
<dbReference type="HAMAP" id="MF_00248">
    <property type="entry name" value="HslV"/>
    <property type="match status" value="1"/>
</dbReference>
<dbReference type="InterPro" id="IPR022281">
    <property type="entry name" value="ATP-dep_Prtase_HsIV_su"/>
</dbReference>
<dbReference type="InterPro" id="IPR029055">
    <property type="entry name" value="Ntn_hydrolases_N"/>
</dbReference>
<dbReference type="InterPro" id="IPR001353">
    <property type="entry name" value="Proteasome_sua/b"/>
</dbReference>
<dbReference type="InterPro" id="IPR023333">
    <property type="entry name" value="Proteasome_suB-type"/>
</dbReference>
<dbReference type="NCBIfam" id="TIGR03692">
    <property type="entry name" value="ATP_dep_HslV"/>
    <property type="match status" value="1"/>
</dbReference>
<dbReference type="NCBIfam" id="NF003964">
    <property type="entry name" value="PRK05456.1"/>
    <property type="match status" value="1"/>
</dbReference>
<dbReference type="PANTHER" id="PTHR32194:SF0">
    <property type="entry name" value="ATP-DEPENDENT PROTEASE SUBUNIT HSLV"/>
    <property type="match status" value="1"/>
</dbReference>
<dbReference type="PANTHER" id="PTHR32194">
    <property type="entry name" value="METALLOPROTEASE TLDD"/>
    <property type="match status" value="1"/>
</dbReference>
<dbReference type="Pfam" id="PF00227">
    <property type="entry name" value="Proteasome"/>
    <property type="match status" value="1"/>
</dbReference>
<dbReference type="PIRSF" id="PIRSF039093">
    <property type="entry name" value="HslV"/>
    <property type="match status" value="1"/>
</dbReference>
<dbReference type="SUPFAM" id="SSF56235">
    <property type="entry name" value="N-terminal nucleophile aminohydrolases (Ntn hydrolases)"/>
    <property type="match status" value="1"/>
</dbReference>
<dbReference type="PROSITE" id="PS51476">
    <property type="entry name" value="PROTEASOME_BETA_2"/>
    <property type="match status" value="1"/>
</dbReference>
<keyword id="KW-0021">Allosteric enzyme</keyword>
<keyword id="KW-0963">Cytoplasm</keyword>
<keyword id="KW-0378">Hydrolase</keyword>
<keyword id="KW-0479">Metal-binding</keyword>
<keyword id="KW-0645">Protease</keyword>
<keyword id="KW-0915">Sodium</keyword>
<keyword id="KW-0888">Threonine protease</keyword>
<name>HSLV_PSEFS</name>
<organism>
    <name type="scientific">Pseudomonas fluorescens (strain SBW25)</name>
    <dbReference type="NCBI Taxonomy" id="216595"/>
    <lineage>
        <taxon>Bacteria</taxon>
        <taxon>Pseudomonadati</taxon>
        <taxon>Pseudomonadota</taxon>
        <taxon>Gammaproteobacteria</taxon>
        <taxon>Pseudomonadales</taxon>
        <taxon>Pseudomonadaceae</taxon>
        <taxon>Pseudomonas</taxon>
    </lineage>
</organism>
<gene>
    <name evidence="1" type="primary">hslV</name>
    <name type="ordered locus">PFLU_0399</name>
</gene>
<accession>C3KAH1</accession>
<comment type="function">
    <text evidence="1">Protease subunit of a proteasome-like degradation complex believed to be a general protein degrading machinery.</text>
</comment>
<comment type="catalytic activity">
    <reaction evidence="1">
        <text>ATP-dependent cleavage of peptide bonds with broad specificity.</text>
        <dbReference type="EC" id="3.4.25.2"/>
    </reaction>
</comment>
<comment type="activity regulation">
    <text evidence="1">Allosterically activated by HslU binding.</text>
</comment>
<comment type="subunit">
    <text evidence="1">A double ring-shaped homohexamer of HslV is capped on each side by a ring-shaped HslU homohexamer. The assembly of the HslU/HslV complex is dependent on binding of ATP.</text>
</comment>
<comment type="subcellular location">
    <subcellularLocation>
        <location evidence="1">Cytoplasm</location>
    </subcellularLocation>
</comment>
<comment type="similarity">
    <text evidence="1">Belongs to the peptidase T1B family. HslV subfamily.</text>
</comment>
<protein>
    <recommendedName>
        <fullName evidence="1">ATP-dependent protease subunit HslV</fullName>
        <ecNumber evidence="1">3.4.25.2</ecNumber>
    </recommendedName>
</protein>
<proteinExistence type="inferred from homology"/>
<sequence length="176" mass="18742">MTTIVSVRRHGKVVMGGDGQVSLGNTVMKGNAKKVRRLYHGQVLAGFAGATADAFTLFERFEGQLEKHQGHLVRAAVELAKEWRTDRSLSRLEAMLAVANKDASLIITGNGDVVEPEHGLIAMGSGGGYAQAAASALLKKTDLSAREIVETALGIAGDICVFTNHNQTIEEQDLAE</sequence>
<evidence type="ECO:0000255" key="1">
    <source>
        <dbReference type="HAMAP-Rule" id="MF_00248"/>
    </source>
</evidence>
<feature type="chain" id="PRO_1000204512" description="ATP-dependent protease subunit HslV">
    <location>
        <begin position="1"/>
        <end position="176"/>
    </location>
</feature>
<feature type="active site" evidence="1">
    <location>
        <position position="2"/>
    </location>
</feature>
<feature type="binding site" evidence="1">
    <location>
        <position position="157"/>
    </location>
    <ligand>
        <name>Na(+)</name>
        <dbReference type="ChEBI" id="CHEBI:29101"/>
    </ligand>
</feature>
<feature type="binding site" evidence="1">
    <location>
        <position position="160"/>
    </location>
    <ligand>
        <name>Na(+)</name>
        <dbReference type="ChEBI" id="CHEBI:29101"/>
    </ligand>
</feature>
<feature type="binding site" evidence="1">
    <location>
        <position position="163"/>
    </location>
    <ligand>
        <name>Na(+)</name>
        <dbReference type="ChEBI" id="CHEBI:29101"/>
    </ligand>
</feature>
<reference key="1">
    <citation type="journal article" date="2009" name="Genome Biol.">
        <title>Genomic and genetic analyses of diversity and plant interactions of Pseudomonas fluorescens.</title>
        <authorList>
            <person name="Silby M.W."/>
            <person name="Cerdeno-Tarraga A.M."/>
            <person name="Vernikos G.S."/>
            <person name="Giddens S.R."/>
            <person name="Jackson R.W."/>
            <person name="Preston G.M."/>
            <person name="Zhang X.-X."/>
            <person name="Moon C.D."/>
            <person name="Gehrig S.M."/>
            <person name="Godfrey S.A.C."/>
            <person name="Knight C.G."/>
            <person name="Malone J.G."/>
            <person name="Robinson Z."/>
            <person name="Spiers A.J."/>
            <person name="Harris S."/>
            <person name="Challis G.L."/>
            <person name="Yaxley A.M."/>
            <person name="Harris D."/>
            <person name="Seeger K."/>
            <person name="Murphy L."/>
            <person name="Rutter S."/>
            <person name="Squares R."/>
            <person name="Quail M.A."/>
            <person name="Saunders E."/>
            <person name="Mavromatis K."/>
            <person name="Brettin T.S."/>
            <person name="Bentley S.D."/>
            <person name="Hothersall J."/>
            <person name="Stephens E."/>
            <person name="Thomas C.M."/>
            <person name="Parkhill J."/>
            <person name="Levy S.B."/>
            <person name="Rainey P.B."/>
            <person name="Thomson N.R."/>
        </authorList>
    </citation>
    <scope>NUCLEOTIDE SEQUENCE [LARGE SCALE GENOMIC DNA]</scope>
    <source>
        <strain>SBW25</strain>
    </source>
</reference>